<dbReference type="EC" id="2.4.1.91" evidence="4"/>
<dbReference type="EC" id="2.4.1.237" evidence="4"/>
<dbReference type="EMBL" id="AC016662">
    <property type="protein sequence ID" value="AAG52529.1"/>
    <property type="status" value="ALT_SEQ"/>
    <property type="molecule type" value="Genomic_DNA"/>
</dbReference>
<dbReference type="EMBL" id="CP002684">
    <property type="protein sequence ID" value="AEE35520.1"/>
    <property type="molecule type" value="Genomic_DNA"/>
</dbReference>
<dbReference type="EMBL" id="AY092963">
    <property type="protein sequence ID" value="AAM12962.1"/>
    <property type="status" value="ALT_FRAME"/>
    <property type="molecule type" value="mRNA"/>
</dbReference>
<dbReference type="EMBL" id="BT006596">
    <property type="protein sequence ID" value="AAP31940.1"/>
    <property type="molecule type" value="mRNA"/>
</dbReference>
<dbReference type="PIR" id="D96766">
    <property type="entry name" value="D96766"/>
</dbReference>
<dbReference type="RefSeq" id="NP_177529.2">
    <property type="nucleotide sequence ID" value="NM_106048.4"/>
</dbReference>
<dbReference type="SMR" id="Q9C9B0"/>
<dbReference type="FunCoup" id="Q9C9B0">
    <property type="interactions" value="181"/>
</dbReference>
<dbReference type="STRING" id="3702.Q9C9B0"/>
<dbReference type="CAZy" id="GT1">
    <property type="family name" value="Glycosyltransferase Family 1"/>
</dbReference>
<dbReference type="PaxDb" id="3702-AT1G73880.1"/>
<dbReference type="ProteomicsDB" id="243237"/>
<dbReference type="EnsemblPlants" id="AT1G73880.1">
    <property type="protein sequence ID" value="AT1G73880.1"/>
    <property type="gene ID" value="AT1G73880"/>
</dbReference>
<dbReference type="GeneID" id="843725"/>
<dbReference type="Gramene" id="AT1G73880.1">
    <property type="protein sequence ID" value="AT1G73880.1"/>
    <property type="gene ID" value="AT1G73880"/>
</dbReference>
<dbReference type="KEGG" id="ath:AT1G73880"/>
<dbReference type="Araport" id="AT1G73880"/>
<dbReference type="TAIR" id="AT1G73880">
    <property type="gene designation" value="UGT89B1"/>
</dbReference>
<dbReference type="eggNOG" id="KOG1192">
    <property type="taxonomic scope" value="Eukaryota"/>
</dbReference>
<dbReference type="HOGENOM" id="CLU_001724_2_2_1"/>
<dbReference type="InParanoid" id="Q9C9B0"/>
<dbReference type="OMA" id="KVVYVCF"/>
<dbReference type="PRO" id="PR:Q9C9B0"/>
<dbReference type="Proteomes" id="UP000006548">
    <property type="component" value="Chromosome 1"/>
</dbReference>
<dbReference type="ExpressionAtlas" id="Q9C9B0">
    <property type="expression patterns" value="baseline and differential"/>
</dbReference>
<dbReference type="GO" id="GO:0047893">
    <property type="term" value="F:flavonol 3-O-glucosyltransferase activity"/>
    <property type="evidence" value="ECO:0007669"/>
    <property type="project" value="UniProtKB-EC"/>
</dbReference>
<dbReference type="GO" id="GO:0033836">
    <property type="term" value="F:flavonol 7-O-beta-glucosyltransferase activity"/>
    <property type="evidence" value="ECO:0007669"/>
    <property type="project" value="UniProtKB-EC"/>
</dbReference>
<dbReference type="GO" id="GO:0080043">
    <property type="term" value="F:quercetin 3-O-glucosyltransferase activity"/>
    <property type="evidence" value="ECO:0000314"/>
    <property type="project" value="TAIR"/>
</dbReference>
<dbReference type="GO" id="GO:0080046">
    <property type="term" value="F:quercetin 4'-O-glucosyltransferase activity"/>
    <property type="evidence" value="ECO:0000314"/>
    <property type="project" value="TAIR"/>
</dbReference>
<dbReference type="GO" id="GO:0080044">
    <property type="term" value="F:quercetin 7-O-glucosyltransferase activity"/>
    <property type="evidence" value="ECO:0000314"/>
    <property type="project" value="TAIR"/>
</dbReference>
<dbReference type="GO" id="GO:0035251">
    <property type="term" value="F:UDP-glucosyltransferase activity"/>
    <property type="evidence" value="ECO:0000314"/>
    <property type="project" value="TAIR"/>
</dbReference>
<dbReference type="CDD" id="cd03784">
    <property type="entry name" value="GT1_Gtf-like"/>
    <property type="match status" value="1"/>
</dbReference>
<dbReference type="FunFam" id="3.40.50.2000:FF:000064">
    <property type="entry name" value="Glycosyltransferase"/>
    <property type="match status" value="1"/>
</dbReference>
<dbReference type="FunFam" id="3.40.50.2000:FF:000143">
    <property type="entry name" value="UDP-glycosyltransferase 89B1"/>
    <property type="match status" value="1"/>
</dbReference>
<dbReference type="Gene3D" id="3.40.50.2000">
    <property type="entry name" value="Glycogen Phosphorylase B"/>
    <property type="match status" value="2"/>
</dbReference>
<dbReference type="InterPro" id="IPR002213">
    <property type="entry name" value="UDP_glucos_trans"/>
</dbReference>
<dbReference type="PANTHER" id="PTHR48047:SF8">
    <property type="entry name" value="FLAVONOL 3-O-GLUCOSYLTRANSFERASE UGT89B1"/>
    <property type="match status" value="1"/>
</dbReference>
<dbReference type="PANTHER" id="PTHR48047">
    <property type="entry name" value="GLYCOSYLTRANSFERASE"/>
    <property type="match status" value="1"/>
</dbReference>
<dbReference type="Pfam" id="PF00201">
    <property type="entry name" value="UDPGT"/>
    <property type="match status" value="1"/>
</dbReference>
<dbReference type="SUPFAM" id="SSF53756">
    <property type="entry name" value="UDP-Glycosyltransferase/glycogen phosphorylase"/>
    <property type="match status" value="1"/>
</dbReference>
<reference key="1">
    <citation type="journal article" date="2000" name="Nature">
        <title>Sequence and analysis of chromosome 1 of the plant Arabidopsis thaliana.</title>
        <authorList>
            <person name="Theologis A."/>
            <person name="Ecker J.R."/>
            <person name="Palm C.J."/>
            <person name="Federspiel N.A."/>
            <person name="Kaul S."/>
            <person name="White O."/>
            <person name="Alonso J."/>
            <person name="Altafi H."/>
            <person name="Araujo R."/>
            <person name="Bowman C.L."/>
            <person name="Brooks S.Y."/>
            <person name="Buehler E."/>
            <person name="Chan A."/>
            <person name="Chao Q."/>
            <person name="Chen H."/>
            <person name="Cheuk R.F."/>
            <person name="Chin C.W."/>
            <person name="Chung M.K."/>
            <person name="Conn L."/>
            <person name="Conway A.B."/>
            <person name="Conway A.R."/>
            <person name="Creasy T.H."/>
            <person name="Dewar K."/>
            <person name="Dunn P."/>
            <person name="Etgu P."/>
            <person name="Feldblyum T.V."/>
            <person name="Feng J.-D."/>
            <person name="Fong B."/>
            <person name="Fujii C.Y."/>
            <person name="Gill J.E."/>
            <person name="Goldsmith A.D."/>
            <person name="Haas B."/>
            <person name="Hansen N.F."/>
            <person name="Hughes B."/>
            <person name="Huizar L."/>
            <person name="Hunter J.L."/>
            <person name="Jenkins J."/>
            <person name="Johnson-Hopson C."/>
            <person name="Khan S."/>
            <person name="Khaykin E."/>
            <person name="Kim C.J."/>
            <person name="Koo H.L."/>
            <person name="Kremenetskaia I."/>
            <person name="Kurtz D.B."/>
            <person name="Kwan A."/>
            <person name="Lam B."/>
            <person name="Langin-Hooper S."/>
            <person name="Lee A."/>
            <person name="Lee J.M."/>
            <person name="Lenz C.A."/>
            <person name="Li J.H."/>
            <person name="Li Y.-P."/>
            <person name="Lin X."/>
            <person name="Liu S.X."/>
            <person name="Liu Z.A."/>
            <person name="Luros J.S."/>
            <person name="Maiti R."/>
            <person name="Marziali A."/>
            <person name="Militscher J."/>
            <person name="Miranda M."/>
            <person name="Nguyen M."/>
            <person name="Nierman W.C."/>
            <person name="Osborne B.I."/>
            <person name="Pai G."/>
            <person name="Peterson J."/>
            <person name="Pham P.K."/>
            <person name="Rizzo M."/>
            <person name="Rooney T."/>
            <person name="Rowley D."/>
            <person name="Sakano H."/>
            <person name="Salzberg S.L."/>
            <person name="Schwartz J.R."/>
            <person name="Shinn P."/>
            <person name="Southwick A.M."/>
            <person name="Sun H."/>
            <person name="Tallon L.J."/>
            <person name="Tambunga G."/>
            <person name="Toriumi M.J."/>
            <person name="Town C.D."/>
            <person name="Utterback T."/>
            <person name="Van Aken S."/>
            <person name="Vaysberg M."/>
            <person name="Vysotskaia V.S."/>
            <person name="Walker M."/>
            <person name="Wu D."/>
            <person name="Yu G."/>
            <person name="Fraser C.M."/>
            <person name="Venter J.C."/>
            <person name="Davis R.W."/>
        </authorList>
    </citation>
    <scope>NUCLEOTIDE SEQUENCE [LARGE SCALE GENOMIC DNA]</scope>
    <source>
        <strain>cv. Columbia</strain>
    </source>
</reference>
<reference key="2">
    <citation type="journal article" date="2017" name="Plant J.">
        <title>Araport11: a complete reannotation of the Arabidopsis thaliana reference genome.</title>
        <authorList>
            <person name="Cheng C.Y."/>
            <person name="Krishnakumar V."/>
            <person name="Chan A.P."/>
            <person name="Thibaud-Nissen F."/>
            <person name="Schobel S."/>
            <person name="Town C.D."/>
        </authorList>
    </citation>
    <scope>GENOME REANNOTATION</scope>
    <source>
        <strain>cv. Columbia</strain>
    </source>
</reference>
<reference key="3">
    <citation type="journal article" date="2003" name="Science">
        <title>Empirical analysis of transcriptional activity in the Arabidopsis genome.</title>
        <authorList>
            <person name="Yamada K."/>
            <person name="Lim J."/>
            <person name="Dale J.M."/>
            <person name="Chen H."/>
            <person name="Shinn P."/>
            <person name="Palm C.J."/>
            <person name="Southwick A.M."/>
            <person name="Wu H.C."/>
            <person name="Kim C.J."/>
            <person name="Nguyen M."/>
            <person name="Pham P.K."/>
            <person name="Cheuk R.F."/>
            <person name="Karlin-Newmann G."/>
            <person name="Liu S.X."/>
            <person name="Lam B."/>
            <person name="Sakano H."/>
            <person name="Wu T."/>
            <person name="Yu G."/>
            <person name="Miranda M."/>
            <person name="Quach H.L."/>
            <person name="Tripp M."/>
            <person name="Chang C.H."/>
            <person name="Lee J.M."/>
            <person name="Toriumi M.J."/>
            <person name="Chan M.M."/>
            <person name="Tang C.C."/>
            <person name="Onodera C.S."/>
            <person name="Deng J.M."/>
            <person name="Akiyama K."/>
            <person name="Ansari Y."/>
            <person name="Arakawa T."/>
            <person name="Banh J."/>
            <person name="Banno F."/>
            <person name="Bowser L."/>
            <person name="Brooks S.Y."/>
            <person name="Carninci P."/>
            <person name="Chao Q."/>
            <person name="Choy N."/>
            <person name="Enju A."/>
            <person name="Goldsmith A.D."/>
            <person name="Gurjal M."/>
            <person name="Hansen N.F."/>
            <person name="Hayashizaki Y."/>
            <person name="Johnson-Hopson C."/>
            <person name="Hsuan V.W."/>
            <person name="Iida K."/>
            <person name="Karnes M."/>
            <person name="Khan S."/>
            <person name="Koesema E."/>
            <person name="Ishida J."/>
            <person name="Jiang P.X."/>
            <person name="Jones T."/>
            <person name="Kawai J."/>
            <person name="Kamiya A."/>
            <person name="Meyers C."/>
            <person name="Nakajima M."/>
            <person name="Narusaka M."/>
            <person name="Seki M."/>
            <person name="Sakurai T."/>
            <person name="Satou M."/>
            <person name="Tamse R."/>
            <person name="Vaysberg M."/>
            <person name="Wallender E.K."/>
            <person name="Wong C."/>
            <person name="Yamamura Y."/>
            <person name="Yuan S."/>
            <person name="Shinozaki K."/>
            <person name="Davis R.W."/>
            <person name="Theologis A."/>
            <person name="Ecker J.R."/>
        </authorList>
    </citation>
    <scope>NUCLEOTIDE SEQUENCE [LARGE SCALE MRNA]</scope>
    <source>
        <strain>cv. Columbia</strain>
    </source>
</reference>
<reference key="4">
    <citation type="journal article" date="2001" name="J. Biol. Chem.">
        <title>Phylogenetic analysis of the UDP-glycosyltransferase multigene family of Arabidopsis thaliana.</title>
        <authorList>
            <person name="Li Y."/>
            <person name="Baldauf S."/>
            <person name="Lim E.K."/>
            <person name="Bowles D.J."/>
        </authorList>
    </citation>
    <scope>GENE FAMILY</scope>
</reference>
<reference key="5">
    <citation type="journal article" date="2002" name="J. Biol. Chem.">
        <title>The activity of Arabidopsis glycosyltransferases toward salicylic acid, 4-hydroxybenzoic acid, and other benzoates.</title>
        <authorList>
            <person name="Lim E.K."/>
            <person name="Doucet C.J."/>
            <person name="Li Y."/>
            <person name="Elias L."/>
            <person name="Worrall D."/>
            <person name="Spencer S.P."/>
            <person name="Ross J."/>
            <person name="Bowles D.J."/>
        </authorList>
    </citation>
    <scope>FUNCTION</scope>
</reference>
<reference key="6">
    <citation type="journal article" date="2004" name="Biotechnol. Bioeng.">
        <title>Arabidopsis glycosyltransferases as biocatalysts in fermentation for regioselective synthesis of diverse quercetin glucosides.</title>
        <authorList>
            <person name="Lim E.K."/>
            <person name="Ashford D.A."/>
            <person name="Hou B."/>
            <person name="Jackson R.G."/>
            <person name="Bowles D.J."/>
        </authorList>
    </citation>
    <scope>FUNCTION</scope>
    <scope>CATALYTIC ACTIVITY</scope>
</reference>
<accession>Q9C9B0</accession>
<accession>Q8RWP1</accession>
<evidence type="ECO:0000250" key="1">
    <source>
        <dbReference type="UniProtKB" id="A0A0A1HA03"/>
    </source>
</evidence>
<evidence type="ECO:0000250" key="2">
    <source>
        <dbReference type="UniProtKB" id="P51094"/>
    </source>
</evidence>
<evidence type="ECO:0000269" key="3">
    <source>
    </source>
</evidence>
<evidence type="ECO:0000269" key="4">
    <source>
    </source>
</evidence>
<evidence type="ECO:0000303" key="5">
    <source>
    </source>
</evidence>
<evidence type="ECO:0000305" key="6"/>
<evidence type="ECO:0000312" key="7">
    <source>
        <dbReference type="Araport" id="AT1G73880"/>
    </source>
</evidence>
<evidence type="ECO:0000312" key="8">
    <source>
        <dbReference type="EMBL" id="AAG52529.1"/>
    </source>
</evidence>
<keyword id="KW-0328">Glycosyltransferase</keyword>
<keyword id="KW-1185">Reference proteome</keyword>
<keyword id="KW-0808">Transferase</keyword>
<sequence>MKVNEENNKPTKTHVLIFPFPAQGHMIPLLDFTHRLALRGGAALKITVLVTPKNLPFLSPLLSAVVNIEPLILPFPSHPSIPSGVENVQDLPPSGFPLMIHALGNLHAPLISWITSHPSPPVAIVSDFFLGWTKNLGIPRFDFSPSAAITCCILNTLWIEMPTKINEDDDNEILHFPKIPNCPKYRFDQISSLYRSYVHGDPAWEFIRDSFRDNVASWGLVVNSFTAMEGVYLEHLKREMGHDRVWAVGPIIPLSGDNRGGPTSVSVDHVMSWLDAREDNHVVYVCFGSQVVLTKEQTLALASGLEKSGVHFIWAVKEPVEKDSTRGNILDGFDDRVAGRGLVIRGWAPQVAVLRHRAVGAFLTHCGWNSVVEAVVAGVLMLTWPMRADQYTDASLVVDELKVGVRACEGPDTVPDPDELARVFADSVTGNQTERIKAVELRKAALDAIQERGSSVNDLDGFIQHVVSLGLNK</sequence>
<feature type="chain" id="PRO_0000409137" description="Flavonol 3-O-glucosyltransferase UGT89B1">
    <location>
        <begin position="1"/>
        <end position="473"/>
    </location>
</feature>
<feature type="active site" description="Proton acceptor" evidence="1">
    <location>
        <position position="25"/>
    </location>
</feature>
<feature type="active site" description="Charge relay" evidence="1">
    <location>
        <position position="127"/>
    </location>
</feature>
<feature type="binding site" evidence="2">
    <location>
        <position position="25"/>
    </location>
    <ligand>
        <name>an anthocyanidin</name>
        <dbReference type="ChEBI" id="CHEBI:143576"/>
    </ligand>
</feature>
<feature type="binding site" evidence="1">
    <location>
        <position position="348"/>
    </location>
    <ligand>
        <name>UDP-alpha-D-glucose</name>
        <dbReference type="ChEBI" id="CHEBI:58885"/>
    </ligand>
</feature>
<feature type="binding site" evidence="1">
    <location>
        <position position="350"/>
    </location>
    <ligand>
        <name>UDP-alpha-D-glucose</name>
        <dbReference type="ChEBI" id="CHEBI:58885"/>
    </ligand>
</feature>
<feature type="binding site" evidence="1">
    <location>
        <position position="365"/>
    </location>
    <ligand>
        <name>UDP-alpha-D-glucose</name>
        <dbReference type="ChEBI" id="CHEBI:58885"/>
    </ligand>
</feature>
<feature type="binding site" evidence="1">
    <location>
        <position position="368"/>
    </location>
    <ligand>
        <name>UDP-alpha-D-glucose</name>
        <dbReference type="ChEBI" id="CHEBI:58885"/>
    </ligand>
</feature>
<feature type="binding site" evidence="1">
    <location>
        <position position="369"/>
    </location>
    <ligand>
        <name>UDP-alpha-D-glucose</name>
        <dbReference type="ChEBI" id="CHEBI:58885"/>
    </ligand>
</feature>
<feature type="binding site" evidence="1">
    <location>
        <position position="370"/>
    </location>
    <ligand>
        <name>UDP-alpha-D-glucose</name>
        <dbReference type="ChEBI" id="CHEBI:58885"/>
    </ligand>
</feature>
<feature type="binding site" evidence="1">
    <location>
        <position position="373"/>
    </location>
    <ligand>
        <name>UDP-alpha-D-glucose</name>
        <dbReference type="ChEBI" id="CHEBI:58885"/>
    </ligand>
</feature>
<feature type="binding site" evidence="2">
    <location>
        <position position="388"/>
    </location>
    <ligand>
        <name>an anthocyanidin</name>
        <dbReference type="ChEBI" id="CHEBI:143576"/>
    </ligand>
</feature>
<feature type="binding site" evidence="1">
    <location>
        <position position="389"/>
    </location>
    <ligand>
        <name>UDP-alpha-D-glucose</name>
        <dbReference type="ChEBI" id="CHEBI:58885"/>
    </ligand>
</feature>
<feature type="binding site" evidence="1">
    <location>
        <position position="390"/>
    </location>
    <ligand>
        <name>UDP-alpha-D-glucose</name>
        <dbReference type="ChEBI" id="CHEBI:58885"/>
    </ligand>
</feature>
<name>U89B1_ARATH</name>
<protein>
    <recommendedName>
        <fullName evidence="6">Flavonol 3-O-glucosyltransferase UGT89B1</fullName>
        <ecNumber evidence="4">2.4.1.91</ecNumber>
    </recommendedName>
    <alternativeName>
        <fullName evidence="6">Flavonol 7-O-beta-glucosyltransferase UGT89B1</fullName>
        <ecNumber evidence="4">2.4.1.237</ecNumber>
    </alternativeName>
    <alternativeName>
        <fullName evidence="5">UDP-glycosyltransferase 89B1</fullName>
    </alternativeName>
</protein>
<gene>
    <name evidence="5" type="primary">UGT89B1</name>
    <name evidence="7" type="ordered locus">At1g73880</name>
    <name evidence="8" type="ORF">F2P9.25</name>
</gene>
<organism>
    <name type="scientific">Arabidopsis thaliana</name>
    <name type="common">Mouse-ear cress</name>
    <dbReference type="NCBI Taxonomy" id="3702"/>
    <lineage>
        <taxon>Eukaryota</taxon>
        <taxon>Viridiplantae</taxon>
        <taxon>Streptophyta</taxon>
        <taxon>Embryophyta</taxon>
        <taxon>Tracheophyta</taxon>
        <taxon>Spermatophyta</taxon>
        <taxon>Magnoliopsida</taxon>
        <taxon>eudicotyledons</taxon>
        <taxon>Gunneridae</taxon>
        <taxon>Pentapetalae</taxon>
        <taxon>rosids</taxon>
        <taxon>malvids</taxon>
        <taxon>Brassicales</taxon>
        <taxon>Brassicaceae</taxon>
        <taxon>Camelineae</taxon>
        <taxon>Arabidopsis</taxon>
    </lineage>
</organism>
<proteinExistence type="evidence at protein level"/>
<comment type="function">
    <text evidence="3 4">Possesses quercetin 3-O-glucosyltransferase, 7-O-glucosyltransferase and 4'-O-glucosyltransferase activities in vitro. Also active in vitro on benzoates and benzoate derivatives.</text>
</comment>
<comment type="catalytic activity">
    <reaction evidence="4">
        <text>a flavonol + UDP-alpha-D-glucose = a flavonol 3-O-beta-D-glucoside + UDP + H(+)</text>
        <dbReference type="Rhea" id="RHEA:22300"/>
        <dbReference type="ChEBI" id="CHEBI:15378"/>
        <dbReference type="ChEBI" id="CHEBI:16816"/>
        <dbReference type="ChEBI" id="CHEBI:28802"/>
        <dbReference type="ChEBI" id="CHEBI:58223"/>
        <dbReference type="ChEBI" id="CHEBI:58885"/>
        <dbReference type="EC" id="2.4.1.91"/>
    </reaction>
</comment>
<comment type="catalytic activity">
    <reaction evidence="4">
        <text>a 7-O-hydroxy-flavonol + UDP-alpha-D-glucose = a flavonol 7-O-beta-D-glucoside + UDP + H(+)</text>
        <dbReference type="Rhea" id="RHEA:23164"/>
        <dbReference type="ChEBI" id="CHEBI:15378"/>
        <dbReference type="ChEBI" id="CHEBI:52144"/>
        <dbReference type="ChEBI" id="CHEBI:52267"/>
        <dbReference type="ChEBI" id="CHEBI:58223"/>
        <dbReference type="ChEBI" id="CHEBI:58885"/>
        <dbReference type="EC" id="2.4.1.237"/>
    </reaction>
</comment>
<comment type="similarity">
    <text evidence="6">Belongs to the UDP-glycosyltransferase family.</text>
</comment>
<comment type="sequence caution" evidence="6">
    <conflict type="erroneous gene model prediction">
        <sequence resource="EMBL-CDS" id="AAG52529"/>
    </conflict>
</comment>
<comment type="sequence caution" evidence="6">
    <conflict type="frameshift">
        <sequence resource="EMBL-CDS" id="AAM12962"/>
    </conflict>
</comment>